<name>NUON_MYCSJ</name>
<dbReference type="EC" id="7.1.1.-" evidence="1"/>
<dbReference type="EMBL" id="CP000580">
    <property type="protein sequence ID" value="ABO00265.1"/>
    <property type="molecule type" value="Genomic_DNA"/>
</dbReference>
<dbReference type="SMR" id="A3Q537"/>
<dbReference type="KEGG" id="mjl:Mjls_4495"/>
<dbReference type="HOGENOM" id="CLU_007100_1_3_11"/>
<dbReference type="GO" id="GO:0005886">
    <property type="term" value="C:plasma membrane"/>
    <property type="evidence" value="ECO:0007669"/>
    <property type="project" value="UniProtKB-SubCell"/>
</dbReference>
<dbReference type="GO" id="GO:0008137">
    <property type="term" value="F:NADH dehydrogenase (ubiquinone) activity"/>
    <property type="evidence" value="ECO:0007669"/>
    <property type="project" value="InterPro"/>
</dbReference>
<dbReference type="GO" id="GO:0050136">
    <property type="term" value="F:NADH:ubiquinone reductase (non-electrogenic) activity"/>
    <property type="evidence" value="ECO:0007669"/>
    <property type="project" value="UniProtKB-UniRule"/>
</dbReference>
<dbReference type="GO" id="GO:0048038">
    <property type="term" value="F:quinone binding"/>
    <property type="evidence" value="ECO:0007669"/>
    <property type="project" value="UniProtKB-KW"/>
</dbReference>
<dbReference type="GO" id="GO:0042773">
    <property type="term" value="P:ATP synthesis coupled electron transport"/>
    <property type="evidence" value="ECO:0007669"/>
    <property type="project" value="InterPro"/>
</dbReference>
<dbReference type="HAMAP" id="MF_00445">
    <property type="entry name" value="NDH1_NuoN_1"/>
    <property type="match status" value="1"/>
</dbReference>
<dbReference type="InterPro" id="IPR010096">
    <property type="entry name" value="NADH-Q_OxRdtase_suN/2"/>
</dbReference>
<dbReference type="InterPro" id="IPR001750">
    <property type="entry name" value="ND/Mrp_TM"/>
</dbReference>
<dbReference type="PANTHER" id="PTHR22773">
    <property type="entry name" value="NADH DEHYDROGENASE"/>
    <property type="match status" value="1"/>
</dbReference>
<dbReference type="Pfam" id="PF00361">
    <property type="entry name" value="Proton_antipo_M"/>
    <property type="match status" value="1"/>
</dbReference>
<sequence length="469" mass="48950">MNPEEAMRPLLMASEMMMFGAGLVALIAGSFLRRQRQWWVGVMAAAAQVGVIGVAVVQMVGPDQMAFEGAFSVDTATGVARIACAAGLLLIWAVAGAEMRASPREAETYALLMFSATGVLVLAGAEDLLLLVAGYFLASIPLYGLVGLARSAAAAEAAMKAYLMGALFGILLMLGVTILYGLTGATRYPQLAMTLSGAPAVAVAAGVVGVLAGLMFEAGGVPAHFWVPDAAQGANATAATFLTTVPKIGALVALYRLTTVLPDTLAWPVLIAVFAVISMTLGNLAAYWQQDPRRLLGWSTVSQVGYLLVPITVAGASELALPSLLFYLGGYTVTNIAAFAVTAALPGRRDLDSYRGLARTRPWLAAALVVALLGLVGTPPTAVFIGKVTTAAAAWDGRYAWLAVVVFVNTLVSLFYYLRWIIPAFGRPHETGDADQSAVQHWPARVAVLAAALSLLLGIIAGPVWQLVT</sequence>
<keyword id="KW-1003">Cell membrane</keyword>
<keyword id="KW-0472">Membrane</keyword>
<keyword id="KW-0520">NAD</keyword>
<keyword id="KW-0874">Quinone</keyword>
<keyword id="KW-1278">Translocase</keyword>
<keyword id="KW-0812">Transmembrane</keyword>
<keyword id="KW-1133">Transmembrane helix</keyword>
<keyword id="KW-0813">Transport</keyword>
<evidence type="ECO:0000255" key="1">
    <source>
        <dbReference type="HAMAP-Rule" id="MF_00445"/>
    </source>
</evidence>
<reference key="1">
    <citation type="submission" date="2007-02" db="EMBL/GenBank/DDBJ databases">
        <title>Complete sequence of Mycobacterium sp. JLS.</title>
        <authorList>
            <consortium name="US DOE Joint Genome Institute"/>
            <person name="Copeland A."/>
            <person name="Lucas S."/>
            <person name="Lapidus A."/>
            <person name="Barry K."/>
            <person name="Detter J.C."/>
            <person name="Glavina del Rio T."/>
            <person name="Hammon N."/>
            <person name="Israni S."/>
            <person name="Dalin E."/>
            <person name="Tice H."/>
            <person name="Pitluck S."/>
            <person name="Chain P."/>
            <person name="Malfatti S."/>
            <person name="Shin M."/>
            <person name="Vergez L."/>
            <person name="Schmutz J."/>
            <person name="Larimer F."/>
            <person name="Land M."/>
            <person name="Hauser L."/>
            <person name="Kyrpides N."/>
            <person name="Mikhailova N."/>
            <person name="Miller C.D."/>
            <person name="Anderson A.J."/>
            <person name="Sims R.C."/>
            <person name="Richardson P."/>
        </authorList>
    </citation>
    <scope>NUCLEOTIDE SEQUENCE [LARGE SCALE GENOMIC DNA]</scope>
    <source>
        <strain>JLS</strain>
    </source>
</reference>
<protein>
    <recommendedName>
        <fullName evidence="1">NADH-quinone oxidoreductase subunit N</fullName>
        <ecNumber evidence="1">7.1.1.-</ecNumber>
    </recommendedName>
    <alternativeName>
        <fullName evidence="1">NADH dehydrogenase I subunit N</fullName>
    </alternativeName>
    <alternativeName>
        <fullName evidence="1">NDH-1 subunit N</fullName>
    </alternativeName>
</protein>
<accession>A3Q537</accession>
<organism>
    <name type="scientific">Mycobacterium sp. (strain JLS)</name>
    <dbReference type="NCBI Taxonomy" id="164757"/>
    <lineage>
        <taxon>Bacteria</taxon>
        <taxon>Bacillati</taxon>
        <taxon>Actinomycetota</taxon>
        <taxon>Actinomycetes</taxon>
        <taxon>Mycobacteriales</taxon>
        <taxon>Mycobacteriaceae</taxon>
        <taxon>Mycobacterium</taxon>
    </lineage>
</organism>
<proteinExistence type="inferred from homology"/>
<comment type="function">
    <text evidence="1">NDH-1 shuttles electrons from NADH, via FMN and iron-sulfur (Fe-S) centers, to quinones in the respiratory chain. The immediate electron acceptor for the enzyme in this species is believed to be a menaquinone. Couples the redox reaction to proton translocation (for every two electrons transferred, four hydrogen ions are translocated across the cytoplasmic membrane), and thus conserves the redox energy in a proton gradient.</text>
</comment>
<comment type="catalytic activity">
    <reaction evidence="1">
        <text>a quinone + NADH + 5 H(+)(in) = a quinol + NAD(+) + 4 H(+)(out)</text>
        <dbReference type="Rhea" id="RHEA:57888"/>
        <dbReference type="ChEBI" id="CHEBI:15378"/>
        <dbReference type="ChEBI" id="CHEBI:24646"/>
        <dbReference type="ChEBI" id="CHEBI:57540"/>
        <dbReference type="ChEBI" id="CHEBI:57945"/>
        <dbReference type="ChEBI" id="CHEBI:132124"/>
    </reaction>
</comment>
<comment type="subunit">
    <text evidence="1">NDH-1 is composed of 14 different subunits. Subunits NuoA, H, J, K, L, M, N constitute the membrane sector of the complex.</text>
</comment>
<comment type="subcellular location">
    <subcellularLocation>
        <location evidence="1">Cell membrane</location>
        <topology evidence="1">Multi-pass membrane protein</topology>
    </subcellularLocation>
</comment>
<comment type="similarity">
    <text evidence="1">Belongs to the complex I subunit 2 family.</text>
</comment>
<gene>
    <name evidence="1" type="primary">nuoN</name>
    <name type="ordered locus">Mjls_4495</name>
</gene>
<feature type="chain" id="PRO_0000391183" description="NADH-quinone oxidoreductase subunit N">
    <location>
        <begin position="1"/>
        <end position="469"/>
    </location>
</feature>
<feature type="transmembrane region" description="Helical" evidence="1">
    <location>
        <begin position="9"/>
        <end position="29"/>
    </location>
</feature>
<feature type="transmembrane region" description="Helical" evidence="1">
    <location>
        <begin position="40"/>
        <end position="60"/>
    </location>
</feature>
<feature type="transmembrane region" description="Helical" evidence="1">
    <location>
        <begin position="76"/>
        <end position="96"/>
    </location>
</feature>
<feature type="transmembrane region" description="Helical" evidence="1">
    <location>
        <begin position="105"/>
        <end position="125"/>
    </location>
</feature>
<feature type="transmembrane region" description="Helical" evidence="1">
    <location>
        <begin position="128"/>
        <end position="148"/>
    </location>
</feature>
<feature type="transmembrane region" description="Helical" evidence="1">
    <location>
        <begin position="162"/>
        <end position="182"/>
    </location>
</feature>
<feature type="transmembrane region" description="Helical" evidence="1">
    <location>
        <begin position="201"/>
        <end position="221"/>
    </location>
</feature>
<feature type="transmembrane region" description="Helical" evidence="1">
    <location>
        <begin position="234"/>
        <end position="254"/>
    </location>
</feature>
<feature type="transmembrane region" description="Helical" evidence="1">
    <location>
        <begin position="265"/>
        <end position="285"/>
    </location>
</feature>
<feature type="transmembrane region" description="Helical" evidence="1">
    <location>
        <begin position="294"/>
        <end position="316"/>
    </location>
</feature>
<feature type="transmembrane region" description="Helical" evidence="1">
    <location>
        <begin position="327"/>
        <end position="347"/>
    </location>
</feature>
<feature type="transmembrane region" description="Helical" evidence="1">
    <location>
        <begin position="365"/>
        <end position="385"/>
    </location>
</feature>
<feature type="transmembrane region" description="Helical" evidence="1">
    <location>
        <begin position="402"/>
        <end position="422"/>
    </location>
</feature>
<feature type="transmembrane region" description="Helical" evidence="1">
    <location>
        <begin position="448"/>
        <end position="468"/>
    </location>
</feature>